<name>SIM15_DANRE</name>
<organism>
    <name type="scientific">Danio rerio</name>
    <name type="common">Zebrafish</name>
    <name type="synonym">Brachydanio rerio</name>
    <dbReference type="NCBI Taxonomy" id="7955"/>
    <lineage>
        <taxon>Eukaryota</taxon>
        <taxon>Metazoa</taxon>
        <taxon>Chordata</taxon>
        <taxon>Craniata</taxon>
        <taxon>Vertebrata</taxon>
        <taxon>Euteleostomi</taxon>
        <taxon>Actinopterygii</taxon>
        <taxon>Neopterygii</taxon>
        <taxon>Teleostei</taxon>
        <taxon>Ostariophysi</taxon>
        <taxon>Cypriniformes</taxon>
        <taxon>Danionidae</taxon>
        <taxon>Danioninae</taxon>
        <taxon>Danio</taxon>
    </lineage>
</organism>
<keyword id="KW-0175">Coiled coil</keyword>
<keyword id="KW-0472">Membrane</keyword>
<keyword id="KW-1185">Reference proteome</keyword>
<keyword id="KW-0812">Transmembrane</keyword>
<keyword id="KW-1133">Transmembrane helix</keyword>
<proteinExistence type="inferred from homology"/>
<reference key="1">
    <citation type="journal article" date="2013" name="Nature">
        <title>The zebrafish reference genome sequence and its relationship to the human genome.</title>
        <authorList>
            <person name="Howe K."/>
            <person name="Clark M.D."/>
            <person name="Torroja C.F."/>
            <person name="Torrance J."/>
            <person name="Berthelot C."/>
            <person name="Muffato M."/>
            <person name="Collins J.E."/>
            <person name="Humphray S."/>
            <person name="McLaren K."/>
            <person name="Matthews L."/>
            <person name="McLaren S."/>
            <person name="Sealy I."/>
            <person name="Caccamo M."/>
            <person name="Churcher C."/>
            <person name="Scott C."/>
            <person name="Barrett J.C."/>
            <person name="Koch R."/>
            <person name="Rauch G.J."/>
            <person name="White S."/>
            <person name="Chow W."/>
            <person name="Kilian B."/>
            <person name="Quintais L.T."/>
            <person name="Guerra-Assuncao J.A."/>
            <person name="Zhou Y."/>
            <person name="Gu Y."/>
            <person name="Yen J."/>
            <person name="Vogel J.H."/>
            <person name="Eyre T."/>
            <person name="Redmond S."/>
            <person name="Banerjee R."/>
            <person name="Chi J."/>
            <person name="Fu B."/>
            <person name="Langley E."/>
            <person name="Maguire S.F."/>
            <person name="Laird G.K."/>
            <person name="Lloyd D."/>
            <person name="Kenyon E."/>
            <person name="Donaldson S."/>
            <person name="Sehra H."/>
            <person name="Almeida-King J."/>
            <person name="Loveland J."/>
            <person name="Trevanion S."/>
            <person name="Jones M."/>
            <person name="Quail M."/>
            <person name="Willey D."/>
            <person name="Hunt A."/>
            <person name="Burton J."/>
            <person name="Sims S."/>
            <person name="McLay K."/>
            <person name="Plumb B."/>
            <person name="Davis J."/>
            <person name="Clee C."/>
            <person name="Oliver K."/>
            <person name="Clark R."/>
            <person name="Riddle C."/>
            <person name="Elliot D."/>
            <person name="Threadgold G."/>
            <person name="Harden G."/>
            <person name="Ware D."/>
            <person name="Begum S."/>
            <person name="Mortimore B."/>
            <person name="Kerry G."/>
            <person name="Heath P."/>
            <person name="Phillimore B."/>
            <person name="Tracey A."/>
            <person name="Corby N."/>
            <person name="Dunn M."/>
            <person name="Johnson C."/>
            <person name="Wood J."/>
            <person name="Clark S."/>
            <person name="Pelan S."/>
            <person name="Griffiths G."/>
            <person name="Smith M."/>
            <person name="Glithero R."/>
            <person name="Howden P."/>
            <person name="Barker N."/>
            <person name="Lloyd C."/>
            <person name="Stevens C."/>
            <person name="Harley J."/>
            <person name="Holt K."/>
            <person name="Panagiotidis G."/>
            <person name="Lovell J."/>
            <person name="Beasley H."/>
            <person name="Henderson C."/>
            <person name="Gordon D."/>
            <person name="Auger K."/>
            <person name="Wright D."/>
            <person name="Collins J."/>
            <person name="Raisen C."/>
            <person name="Dyer L."/>
            <person name="Leung K."/>
            <person name="Robertson L."/>
            <person name="Ambridge K."/>
            <person name="Leongamornlert D."/>
            <person name="McGuire S."/>
            <person name="Gilderthorp R."/>
            <person name="Griffiths C."/>
            <person name="Manthravadi D."/>
            <person name="Nichol S."/>
            <person name="Barker G."/>
            <person name="Whitehead S."/>
            <person name="Kay M."/>
            <person name="Brown J."/>
            <person name="Murnane C."/>
            <person name="Gray E."/>
            <person name="Humphries M."/>
            <person name="Sycamore N."/>
            <person name="Barker D."/>
            <person name="Saunders D."/>
            <person name="Wallis J."/>
            <person name="Babbage A."/>
            <person name="Hammond S."/>
            <person name="Mashreghi-Mohammadi M."/>
            <person name="Barr L."/>
            <person name="Martin S."/>
            <person name="Wray P."/>
            <person name="Ellington A."/>
            <person name="Matthews N."/>
            <person name="Ellwood M."/>
            <person name="Woodmansey R."/>
            <person name="Clark G."/>
            <person name="Cooper J."/>
            <person name="Tromans A."/>
            <person name="Grafham D."/>
            <person name="Skuce C."/>
            <person name="Pandian R."/>
            <person name="Andrews R."/>
            <person name="Harrison E."/>
            <person name="Kimberley A."/>
            <person name="Garnett J."/>
            <person name="Fosker N."/>
            <person name="Hall R."/>
            <person name="Garner P."/>
            <person name="Kelly D."/>
            <person name="Bird C."/>
            <person name="Palmer S."/>
            <person name="Gehring I."/>
            <person name="Berger A."/>
            <person name="Dooley C.M."/>
            <person name="Ersan-Urun Z."/>
            <person name="Eser C."/>
            <person name="Geiger H."/>
            <person name="Geisler M."/>
            <person name="Karotki L."/>
            <person name="Kirn A."/>
            <person name="Konantz J."/>
            <person name="Konantz M."/>
            <person name="Oberlander M."/>
            <person name="Rudolph-Geiger S."/>
            <person name="Teucke M."/>
            <person name="Lanz C."/>
            <person name="Raddatz G."/>
            <person name="Osoegawa K."/>
            <person name="Zhu B."/>
            <person name="Rapp A."/>
            <person name="Widaa S."/>
            <person name="Langford C."/>
            <person name="Yang F."/>
            <person name="Schuster S.C."/>
            <person name="Carter N.P."/>
            <person name="Harrow J."/>
            <person name="Ning Z."/>
            <person name="Herrero J."/>
            <person name="Searle S.M."/>
            <person name="Enright A."/>
            <person name="Geisler R."/>
            <person name="Plasterk R.H."/>
            <person name="Lee C."/>
            <person name="Westerfield M."/>
            <person name="de Jong P.J."/>
            <person name="Zon L.I."/>
            <person name="Postlethwait J.H."/>
            <person name="Nusslein-Volhard C."/>
            <person name="Hubbard T.J."/>
            <person name="Roest Crollius H."/>
            <person name="Rogers J."/>
            <person name="Stemple D.L."/>
        </authorList>
    </citation>
    <scope>NUCLEOTIDE SEQUENCE [LARGE SCALE GENOMIC DNA]</scope>
    <source>
        <strain>Tuebingen</strain>
    </source>
</reference>
<reference key="2">
    <citation type="submission" date="2007-03" db="EMBL/GenBank/DDBJ databases">
        <authorList>
            <consortium name="NIH - Zebrafish Gene Collection (ZGC) project"/>
        </authorList>
    </citation>
    <scope>NUCLEOTIDE SEQUENCE [LARGE SCALE MRNA]</scope>
    <source>
        <tissue>Embryo</tissue>
        <tissue>Ovary</tissue>
    </source>
</reference>
<comment type="subcellular location">
    <subcellularLocation>
        <location evidence="3">Membrane</location>
        <topology evidence="3">Single-pass membrane protein</topology>
    </subcellularLocation>
</comment>
<comment type="similarity">
    <text evidence="3">Belongs to the SMIM15 family.</text>
</comment>
<sequence length="74" mass="8549">MIDIKAWAEYVVEWAAKDPYGFLTTVILALTPLFIASALLSWKLAKMIEAKDREQKKKQKRQENIAKAKRAKKD</sequence>
<feature type="chain" id="PRO_0000326079" description="Small integral membrane protein 15">
    <location>
        <begin position="1"/>
        <end position="74"/>
    </location>
</feature>
<feature type="transmembrane region" description="Helical" evidence="1">
    <location>
        <begin position="20"/>
        <end position="40"/>
    </location>
</feature>
<feature type="region of interest" description="Disordered" evidence="2">
    <location>
        <begin position="53"/>
        <end position="74"/>
    </location>
</feature>
<feature type="coiled-coil region" evidence="1">
    <location>
        <begin position="42"/>
        <end position="74"/>
    </location>
</feature>
<feature type="compositionally biased region" description="Basic and acidic residues" evidence="2">
    <location>
        <begin position="53"/>
        <end position="66"/>
    </location>
</feature>
<protein>
    <recommendedName>
        <fullName>Small integral membrane protein 15</fullName>
    </recommendedName>
</protein>
<evidence type="ECO:0000255" key="1"/>
<evidence type="ECO:0000256" key="2">
    <source>
        <dbReference type="SAM" id="MobiDB-lite"/>
    </source>
</evidence>
<evidence type="ECO:0000305" key="3"/>
<accession>A3KNM5</accession>
<gene>
    <name type="primary">smim15</name>
    <name type="ORF">si:ch211-198n5.13</name>
    <name type="ORF">zgc:162244</name>
</gene>
<dbReference type="EMBL" id="CR759968">
    <property type="protein sequence ID" value="CAP19509.1"/>
    <property type="molecule type" value="Genomic_DNA"/>
</dbReference>
<dbReference type="EMBL" id="BC133916">
    <property type="protein sequence ID" value="AAI33917.1"/>
    <property type="molecule type" value="mRNA"/>
</dbReference>
<dbReference type="EMBL" id="BC153516">
    <property type="protein sequence ID" value="AAI53517.1"/>
    <property type="molecule type" value="mRNA"/>
</dbReference>
<dbReference type="RefSeq" id="NP_001153418.1">
    <property type="nucleotide sequence ID" value="NM_001159946.2"/>
</dbReference>
<dbReference type="SMR" id="A3KNM5"/>
<dbReference type="FunCoup" id="A3KNM5">
    <property type="interactions" value="623"/>
</dbReference>
<dbReference type="STRING" id="7955.ENSDARP00000116430"/>
<dbReference type="PaxDb" id="7955-ENSDARP00000116430"/>
<dbReference type="Ensembl" id="ENSDART00000144621">
    <property type="protein sequence ID" value="ENSDARP00000116430"/>
    <property type="gene ID" value="ENSDARG00000086699"/>
</dbReference>
<dbReference type="Ensembl" id="ENSDART00000182478">
    <property type="protein sequence ID" value="ENSDARP00000146390"/>
    <property type="gene ID" value="ENSDARG00000114331"/>
</dbReference>
<dbReference type="GeneID" id="556945"/>
<dbReference type="KEGG" id="dre:556945"/>
<dbReference type="AGR" id="ZFIN:ZDB-GENE-070410-48"/>
<dbReference type="CTD" id="643155"/>
<dbReference type="ZFIN" id="ZDB-GENE-070410-48">
    <property type="gene designation" value="smim15"/>
</dbReference>
<dbReference type="eggNOG" id="ENOG502SDBQ">
    <property type="taxonomic scope" value="Eukaryota"/>
</dbReference>
<dbReference type="HOGENOM" id="CLU_2687094_0_0_1"/>
<dbReference type="InParanoid" id="A3KNM5"/>
<dbReference type="OMA" id="MIDFRAW"/>
<dbReference type="OrthoDB" id="6282848at2759"/>
<dbReference type="PhylomeDB" id="A3KNM5"/>
<dbReference type="TreeFam" id="TF328386"/>
<dbReference type="PRO" id="PR:A3KNM5"/>
<dbReference type="Proteomes" id="UP000000437">
    <property type="component" value="Alternate scaffold 8"/>
</dbReference>
<dbReference type="Proteomes" id="UP000000437">
    <property type="component" value="Chromosome 8"/>
</dbReference>
<dbReference type="Bgee" id="ENSDARG00000086699">
    <property type="expression patterns" value="Expressed in early embryo and 28 other cell types or tissues"/>
</dbReference>
<dbReference type="GO" id="GO:0016020">
    <property type="term" value="C:membrane"/>
    <property type="evidence" value="ECO:0007669"/>
    <property type="project" value="UniProtKB-SubCell"/>
</dbReference>
<dbReference type="InterPro" id="IPR027877">
    <property type="entry name" value="Smim15"/>
</dbReference>
<dbReference type="PANTHER" id="PTHR28644">
    <property type="entry name" value="SMALL INTEGRAL MEMBRANE PROTEIN 15"/>
    <property type="match status" value="1"/>
</dbReference>
<dbReference type="PANTHER" id="PTHR28644:SF1">
    <property type="entry name" value="SMALL INTEGRAL MEMBRANE PROTEIN 15"/>
    <property type="match status" value="1"/>
</dbReference>
<dbReference type="Pfam" id="PF15086">
    <property type="entry name" value="UPF0542"/>
    <property type="match status" value="1"/>
</dbReference>